<sequence>MPTPKKGARLGGSPSHQRKILSNLAAQLFEHGAIRTTDAKAKLLRPYAEKLITKAKSGTLADRRNVAKLIPNKEIISVLFDDIAPKVADRSGGYTRIIKLENRKGDNAPMSQISLVTEELASSEASRATRAAASKKAEEEAASEAE</sequence>
<accession>C4LKZ0</accession>
<reference key="1">
    <citation type="journal article" date="2008" name="J. Biotechnol.">
        <title>Ultrafast pyrosequencing of Corynebacterium kroppenstedtii DSM44385 revealed insights into the physiology of a lipophilic corynebacterium that lacks mycolic acids.</title>
        <authorList>
            <person name="Tauch A."/>
            <person name="Schneider J."/>
            <person name="Szczepanowski R."/>
            <person name="Tilker A."/>
            <person name="Viehoever P."/>
            <person name="Gartemann K.-H."/>
            <person name="Arnold W."/>
            <person name="Blom J."/>
            <person name="Brinkrolf K."/>
            <person name="Brune I."/>
            <person name="Goetker S."/>
            <person name="Weisshaar B."/>
            <person name="Goesmann A."/>
            <person name="Droege M."/>
            <person name="Puehler A."/>
        </authorList>
    </citation>
    <scope>NUCLEOTIDE SEQUENCE [LARGE SCALE GENOMIC DNA]</scope>
    <source>
        <strain>DSM 44385 / JCM 11950 / CIP 105744 / CCUG 35717</strain>
    </source>
</reference>
<evidence type="ECO:0000255" key="1">
    <source>
        <dbReference type="HAMAP-Rule" id="MF_01368"/>
    </source>
</evidence>
<evidence type="ECO:0000256" key="2">
    <source>
        <dbReference type="SAM" id="MobiDB-lite"/>
    </source>
</evidence>
<evidence type="ECO:0000305" key="3"/>
<name>RL17_CORK4</name>
<organism>
    <name type="scientific">Corynebacterium kroppenstedtii (strain DSM 44385 / JCM 11950 / CIP 105744 / CCUG 35717)</name>
    <dbReference type="NCBI Taxonomy" id="645127"/>
    <lineage>
        <taxon>Bacteria</taxon>
        <taxon>Bacillati</taxon>
        <taxon>Actinomycetota</taxon>
        <taxon>Actinomycetes</taxon>
        <taxon>Mycobacteriales</taxon>
        <taxon>Corynebacteriaceae</taxon>
        <taxon>Corynebacterium</taxon>
    </lineage>
</organism>
<protein>
    <recommendedName>
        <fullName evidence="1">Large ribosomal subunit protein bL17</fullName>
    </recommendedName>
    <alternativeName>
        <fullName evidence="3">50S ribosomal protein L17</fullName>
    </alternativeName>
</protein>
<keyword id="KW-1185">Reference proteome</keyword>
<keyword id="KW-0687">Ribonucleoprotein</keyword>
<keyword id="KW-0689">Ribosomal protein</keyword>
<proteinExistence type="inferred from homology"/>
<feature type="chain" id="PRO_1000214999" description="Large ribosomal subunit protein bL17">
    <location>
        <begin position="1"/>
        <end position="146"/>
    </location>
</feature>
<feature type="region of interest" description="Disordered" evidence="2">
    <location>
        <begin position="124"/>
        <end position="146"/>
    </location>
</feature>
<feature type="compositionally biased region" description="Low complexity" evidence="2">
    <location>
        <begin position="124"/>
        <end position="134"/>
    </location>
</feature>
<dbReference type="EMBL" id="CP001620">
    <property type="protein sequence ID" value="ACR18495.1"/>
    <property type="molecule type" value="Genomic_DNA"/>
</dbReference>
<dbReference type="RefSeq" id="WP_012732382.1">
    <property type="nucleotide sequence ID" value="NC_012704.1"/>
</dbReference>
<dbReference type="SMR" id="C4LKZ0"/>
<dbReference type="STRING" id="645127.ckrop_1774"/>
<dbReference type="KEGG" id="ckp:ckrop_1774"/>
<dbReference type="eggNOG" id="COG0203">
    <property type="taxonomic scope" value="Bacteria"/>
</dbReference>
<dbReference type="HOGENOM" id="CLU_074407_0_0_11"/>
<dbReference type="OrthoDB" id="9809073at2"/>
<dbReference type="Proteomes" id="UP000001473">
    <property type="component" value="Chromosome"/>
</dbReference>
<dbReference type="GO" id="GO:0022625">
    <property type="term" value="C:cytosolic large ribosomal subunit"/>
    <property type="evidence" value="ECO:0007669"/>
    <property type="project" value="TreeGrafter"/>
</dbReference>
<dbReference type="GO" id="GO:0003735">
    <property type="term" value="F:structural constituent of ribosome"/>
    <property type="evidence" value="ECO:0007669"/>
    <property type="project" value="InterPro"/>
</dbReference>
<dbReference type="GO" id="GO:0006412">
    <property type="term" value="P:translation"/>
    <property type="evidence" value="ECO:0007669"/>
    <property type="project" value="UniProtKB-UniRule"/>
</dbReference>
<dbReference type="Gene3D" id="3.90.1030.10">
    <property type="entry name" value="Ribosomal protein L17"/>
    <property type="match status" value="1"/>
</dbReference>
<dbReference type="HAMAP" id="MF_01368">
    <property type="entry name" value="Ribosomal_bL17"/>
    <property type="match status" value="1"/>
</dbReference>
<dbReference type="InterPro" id="IPR000456">
    <property type="entry name" value="Ribosomal_bL17"/>
</dbReference>
<dbReference type="InterPro" id="IPR047859">
    <property type="entry name" value="Ribosomal_bL17_CS"/>
</dbReference>
<dbReference type="InterPro" id="IPR036373">
    <property type="entry name" value="Ribosomal_bL17_sf"/>
</dbReference>
<dbReference type="NCBIfam" id="TIGR00059">
    <property type="entry name" value="L17"/>
    <property type="match status" value="1"/>
</dbReference>
<dbReference type="PANTHER" id="PTHR14413:SF16">
    <property type="entry name" value="LARGE RIBOSOMAL SUBUNIT PROTEIN BL17M"/>
    <property type="match status" value="1"/>
</dbReference>
<dbReference type="PANTHER" id="PTHR14413">
    <property type="entry name" value="RIBOSOMAL PROTEIN L17"/>
    <property type="match status" value="1"/>
</dbReference>
<dbReference type="Pfam" id="PF01196">
    <property type="entry name" value="Ribosomal_L17"/>
    <property type="match status" value="1"/>
</dbReference>
<dbReference type="SUPFAM" id="SSF64263">
    <property type="entry name" value="Prokaryotic ribosomal protein L17"/>
    <property type="match status" value="1"/>
</dbReference>
<dbReference type="PROSITE" id="PS01167">
    <property type="entry name" value="RIBOSOMAL_L17"/>
    <property type="match status" value="1"/>
</dbReference>
<gene>
    <name evidence="1" type="primary">rplQ</name>
    <name type="ordered locus">ckrop_1774</name>
</gene>
<comment type="subunit">
    <text evidence="1">Part of the 50S ribosomal subunit. Contacts protein L32.</text>
</comment>
<comment type="similarity">
    <text evidence="1">Belongs to the bacterial ribosomal protein bL17 family.</text>
</comment>